<proteinExistence type="inferred from homology"/>
<gene>
    <name evidence="1" type="primary">dxs2</name>
    <name type="ordered locus">Jann_0170</name>
</gene>
<evidence type="ECO:0000255" key="1">
    <source>
        <dbReference type="HAMAP-Rule" id="MF_00315"/>
    </source>
</evidence>
<accession>Q28W25</accession>
<feature type="chain" id="PRO_0000256432" description="1-deoxy-D-xylulose-5-phosphate synthase 2">
    <location>
        <begin position="1"/>
        <end position="636"/>
    </location>
</feature>
<feature type="binding site" evidence="1">
    <location>
        <position position="78"/>
    </location>
    <ligand>
        <name>thiamine diphosphate</name>
        <dbReference type="ChEBI" id="CHEBI:58937"/>
    </ligand>
</feature>
<feature type="binding site" evidence="1">
    <location>
        <begin position="119"/>
        <end position="121"/>
    </location>
    <ligand>
        <name>thiamine diphosphate</name>
        <dbReference type="ChEBI" id="CHEBI:58937"/>
    </ligand>
</feature>
<feature type="binding site" evidence="1">
    <location>
        <position position="150"/>
    </location>
    <ligand>
        <name>Mg(2+)</name>
        <dbReference type="ChEBI" id="CHEBI:18420"/>
    </ligand>
</feature>
<feature type="binding site" evidence="1">
    <location>
        <begin position="151"/>
        <end position="152"/>
    </location>
    <ligand>
        <name>thiamine diphosphate</name>
        <dbReference type="ChEBI" id="CHEBI:58937"/>
    </ligand>
</feature>
<feature type="binding site" evidence="1">
    <location>
        <position position="179"/>
    </location>
    <ligand>
        <name>Mg(2+)</name>
        <dbReference type="ChEBI" id="CHEBI:18420"/>
    </ligand>
</feature>
<feature type="binding site" evidence="1">
    <location>
        <position position="179"/>
    </location>
    <ligand>
        <name>thiamine diphosphate</name>
        <dbReference type="ChEBI" id="CHEBI:58937"/>
    </ligand>
</feature>
<feature type="binding site" evidence="1">
    <location>
        <position position="288"/>
    </location>
    <ligand>
        <name>thiamine diphosphate</name>
        <dbReference type="ChEBI" id="CHEBI:58937"/>
    </ligand>
</feature>
<feature type="binding site" evidence="1">
    <location>
        <position position="370"/>
    </location>
    <ligand>
        <name>thiamine diphosphate</name>
        <dbReference type="ChEBI" id="CHEBI:58937"/>
    </ligand>
</feature>
<reference key="1">
    <citation type="submission" date="2006-02" db="EMBL/GenBank/DDBJ databases">
        <title>Complete sequence of chromosome of Jannaschia sp. CCS1.</title>
        <authorList>
            <consortium name="US DOE Joint Genome Institute"/>
            <person name="Copeland A."/>
            <person name="Lucas S."/>
            <person name="Lapidus A."/>
            <person name="Barry K."/>
            <person name="Detter J.C."/>
            <person name="Glavina del Rio T."/>
            <person name="Hammon N."/>
            <person name="Israni S."/>
            <person name="Pitluck S."/>
            <person name="Brettin T."/>
            <person name="Bruce D."/>
            <person name="Han C."/>
            <person name="Tapia R."/>
            <person name="Gilna P."/>
            <person name="Chertkov O."/>
            <person name="Saunders E."/>
            <person name="Schmutz J."/>
            <person name="Larimer F."/>
            <person name="Land M."/>
            <person name="Kyrpides N."/>
            <person name="Lykidis A."/>
            <person name="Moran M.A."/>
            <person name="Belas R."/>
            <person name="Ye W."/>
            <person name="Buchan A."/>
            <person name="Gonzalez J.M."/>
            <person name="Schell M.A."/>
            <person name="Richardson P."/>
        </authorList>
    </citation>
    <scope>NUCLEOTIDE SEQUENCE [LARGE SCALE GENOMIC DNA]</scope>
    <source>
        <strain>CCS1</strain>
    </source>
</reference>
<protein>
    <recommendedName>
        <fullName evidence="1">1-deoxy-D-xylulose-5-phosphate synthase 2</fullName>
        <ecNumber evidence="1">2.2.1.7</ecNumber>
    </recommendedName>
    <alternativeName>
        <fullName evidence="1">1-deoxyxylulose-5-phosphate synthase 2</fullName>
        <shortName evidence="1">DXP synthase 2</shortName>
        <shortName evidence="1">DXPS 2</shortName>
    </alternativeName>
</protein>
<keyword id="KW-0414">Isoprene biosynthesis</keyword>
<keyword id="KW-0460">Magnesium</keyword>
<keyword id="KW-0479">Metal-binding</keyword>
<keyword id="KW-1185">Reference proteome</keyword>
<keyword id="KW-0784">Thiamine biosynthesis</keyword>
<keyword id="KW-0786">Thiamine pyrophosphate</keyword>
<keyword id="KW-0808">Transferase</keyword>
<dbReference type="EC" id="2.2.1.7" evidence="1"/>
<dbReference type="EMBL" id="CP000264">
    <property type="protein sequence ID" value="ABD53087.1"/>
    <property type="molecule type" value="Genomic_DNA"/>
</dbReference>
<dbReference type="RefSeq" id="WP_011453296.1">
    <property type="nucleotide sequence ID" value="NC_007802.1"/>
</dbReference>
<dbReference type="SMR" id="Q28W25"/>
<dbReference type="STRING" id="290400.Jann_0170"/>
<dbReference type="KEGG" id="jan:Jann_0170"/>
<dbReference type="eggNOG" id="COG1154">
    <property type="taxonomic scope" value="Bacteria"/>
</dbReference>
<dbReference type="HOGENOM" id="CLU_009227_1_4_5"/>
<dbReference type="OrthoDB" id="9803371at2"/>
<dbReference type="UniPathway" id="UPA00064">
    <property type="reaction ID" value="UER00091"/>
</dbReference>
<dbReference type="Proteomes" id="UP000008326">
    <property type="component" value="Chromosome"/>
</dbReference>
<dbReference type="GO" id="GO:0008661">
    <property type="term" value="F:1-deoxy-D-xylulose-5-phosphate synthase activity"/>
    <property type="evidence" value="ECO:0007669"/>
    <property type="project" value="UniProtKB-UniRule"/>
</dbReference>
<dbReference type="GO" id="GO:0000287">
    <property type="term" value="F:magnesium ion binding"/>
    <property type="evidence" value="ECO:0007669"/>
    <property type="project" value="UniProtKB-UniRule"/>
</dbReference>
<dbReference type="GO" id="GO:0030976">
    <property type="term" value="F:thiamine pyrophosphate binding"/>
    <property type="evidence" value="ECO:0007669"/>
    <property type="project" value="UniProtKB-UniRule"/>
</dbReference>
<dbReference type="GO" id="GO:0052865">
    <property type="term" value="P:1-deoxy-D-xylulose 5-phosphate biosynthetic process"/>
    <property type="evidence" value="ECO:0007669"/>
    <property type="project" value="UniProtKB-UniPathway"/>
</dbReference>
<dbReference type="GO" id="GO:0019682">
    <property type="term" value="P:glyceraldehyde-3-phosphate metabolic process"/>
    <property type="evidence" value="ECO:0007669"/>
    <property type="project" value="UniProtKB-ARBA"/>
</dbReference>
<dbReference type="GO" id="GO:0016114">
    <property type="term" value="P:terpenoid biosynthetic process"/>
    <property type="evidence" value="ECO:0007669"/>
    <property type="project" value="UniProtKB-UniRule"/>
</dbReference>
<dbReference type="GO" id="GO:0009228">
    <property type="term" value="P:thiamine biosynthetic process"/>
    <property type="evidence" value="ECO:0007669"/>
    <property type="project" value="UniProtKB-UniRule"/>
</dbReference>
<dbReference type="CDD" id="cd02007">
    <property type="entry name" value="TPP_DXS"/>
    <property type="match status" value="1"/>
</dbReference>
<dbReference type="CDD" id="cd07033">
    <property type="entry name" value="TPP_PYR_DXS_TK_like"/>
    <property type="match status" value="1"/>
</dbReference>
<dbReference type="FunFam" id="3.40.50.920:FF:000002">
    <property type="entry name" value="1-deoxy-D-xylulose-5-phosphate synthase"/>
    <property type="match status" value="1"/>
</dbReference>
<dbReference type="FunFam" id="3.40.50.970:FF:000005">
    <property type="entry name" value="1-deoxy-D-xylulose-5-phosphate synthase"/>
    <property type="match status" value="1"/>
</dbReference>
<dbReference type="Gene3D" id="3.40.50.920">
    <property type="match status" value="1"/>
</dbReference>
<dbReference type="Gene3D" id="3.40.50.970">
    <property type="match status" value="2"/>
</dbReference>
<dbReference type="HAMAP" id="MF_00315">
    <property type="entry name" value="DXP_synth"/>
    <property type="match status" value="1"/>
</dbReference>
<dbReference type="InterPro" id="IPR005477">
    <property type="entry name" value="Dxylulose-5-P_synthase"/>
</dbReference>
<dbReference type="InterPro" id="IPR029061">
    <property type="entry name" value="THDP-binding"/>
</dbReference>
<dbReference type="InterPro" id="IPR009014">
    <property type="entry name" value="Transketo_C/PFOR_II"/>
</dbReference>
<dbReference type="InterPro" id="IPR005475">
    <property type="entry name" value="Transketolase-like_Pyr-bd"/>
</dbReference>
<dbReference type="InterPro" id="IPR020826">
    <property type="entry name" value="Transketolase_BS"/>
</dbReference>
<dbReference type="InterPro" id="IPR033248">
    <property type="entry name" value="Transketolase_C"/>
</dbReference>
<dbReference type="InterPro" id="IPR049557">
    <property type="entry name" value="Transketolase_CS"/>
</dbReference>
<dbReference type="NCBIfam" id="TIGR00204">
    <property type="entry name" value="dxs"/>
    <property type="match status" value="1"/>
</dbReference>
<dbReference type="NCBIfam" id="NF003933">
    <property type="entry name" value="PRK05444.2-2"/>
    <property type="match status" value="1"/>
</dbReference>
<dbReference type="PANTHER" id="PTHR43322">
    <property type="entry name" value="1-D-DEOXYXYLULOSE 5-PHOSPHATE SYNTHASE-RELATED"/>
    <property type="match status" value="1"/>
</dbReference>
<dbReference type="PANTHER" id="PTHR43322:SF5">
    <property type="entry name" value="1-DEOXY-D-XYLULOSE-5-PHOSPHATE SYNTHASE, CHLOROPLASTIC"/>
    <property type="match status" value="1"/>
</dbReference>
<dbReference type="Pfam" id="PF13292">
    <property type="entry name" value="DXP_synthase_N"/>
    <property type="match status" value="1"/>
</dbReference>
<dbReference type="Pfam" id="PF02779">
    <property type="entry name" value="Transket_pyr"/>
    <property type="match status" value="1"/>
</dbReference>
<dbReference type="Pfam" id="PF02780">
    <property type="entry name" value="Transketolase_C"/>
    <property type="match status" value="1"/>
</dbReference>
<dbReference type="SMART" id="SM00861">
    <property type="entry name" value="Transket_pyr"/>
    <property type="match status" value="1"/>
</dbReference>
<dbReference type="SUPFAM" id="SSF52518">
    <property type="entry name" value="Thiamin diphosphate-binding fold (THDP-binding)"/>
    <property type="match status" value="2"/>
</dbReference>
<dbReference type="SUPFAM" id="SSF52922">
    <property type="entry name" value="TK C-terminal domain-like"/>
    <property type="match status" value="1"/>
</dbReference>
<dbReference type="PROSITE" id="PS00801">
    <property type="entry name" value="TRANSKETOLASE_1"/>
    <property type="match status" value="1"/>
</dbReference>
<dbReference type="PROSITE" id="PS00802">
    <property type="entry name" value="TRANSKETOLASE_2"/>
    <property type="match status" value="1"/>
</dbReference>
<comment type="function">
    <text evidence="1">Catalyzes the acyloin condensation reaction between C atoms 2 and 3 of pyruvate and glyceraldehyde 3-phosphate to yield 1-deoxy-D-xylulose-5-phosphate (DXP).</text>
</comment>
<comment type="catalytic activity">
    <reaction evidence="1">
        <text>D-glyceraldehyde 3-phosphate + pyruvate + H(+) = 1-deoxy-D-xylulose 5-phosphate + CO2</text>
        <dbReference type="Rhea" id="RHEA:12605"/>
        <dbReference type="ChEBI" id="CHEBI:15361"/>
        <dbReference type="ChEBI" id="CHEBI:15378"/>
        <dbReference type="ChEBI" id="CHEBI:16526"/>
        <dbReference type="ChEBI" id="CHEBI:57792"/>
        <dbReference type="ChEBI" id="CHEBI:59776"/>
        <dbReference type="EC" id="2.2.1.7"/>
    </reaction>
</comment>
<comment type="cofactor">
    <cofactor evidence="1">
        <name>Mg(2+)</name>
        <dbReference type="ChEBI" id="CHEBI:18420"/>
    </cofactor>
    <text evidence="1">Binds 1 Mg(2+) ion per subunit.</text>
</comment>
<comment type="cofactor">
    <cofactor evidence="1">
        <name>thiamine diphosphate</name>
        <dbReference type="ChEBI" id="CHEBI:58937"/>
    </cofactor>
    <text evidence="1">Binds 1 thiamine pyrophosphate per subunit.</text>
</comment>
<comment type="pathway">
    <text evidence="1">Metabolic intermediate biosynthesis; 1-deoxy-D-xylulose 5-phosphate biosynthesis; 1-deoxy-D-xylulose 5-phosphate from D-glyceraldehyde 3-phosphate and pyruvate: step 1/1.</text>
</comment>
<comment type="subunit">
    <text evidence="1">Homodimer.</text>
</comment>
<comment type="similarity">
    <text evidence="1">Belongs to the transketolase family. DXPS subfamily.</text>
</comment>
<name>DXS2_JANSC</name>
<organism>
    <name type="scientific">Jannaschia sp. (strain CCS1)</name>
    <dbReference type="NCBI Taxonomy" id="290400"/>
    <lineage>
        <taxon>Bacteria</taxon>
        <taxon>Pseudomonadati</taxon>
        <taxon>Pseudomonadota</taxon>
        <taxon>Alphaproteobacteria</taxon>
        <taxon>Rhodobacterales</taxon>
        <taxon>Roseobacteraceae</taxon>
        <taxon>Jannaschia</taxon>
    </lineage>
</organism>
<sequence>MDRPHTPILDQVNYPSDLRRMSNADLAQCADELRAEVISAVSETGGHLGSSLGVVELSVAIHAVFNTPYDKLVWDVGHQCYPHKVLTGRRDRIRTLRQKDGLSGFTKRSESEYDPFGAAHSSTSISAALGFAAAQDLGEATGDGIAVIGDGSISAGMAYEALNNAGDLGKRLFVILNDNEMSIAPPVGAMSKYLTDLSAKSPLATLKDIADGVASHLPEPIRQGAERARELVTGHQPSATLFEHLGFTYIGPVDGHDMEELLTTLRAAKARATGPVLIHAVTVKGKGYSPAELSDDCYHGVAKFDVATGQQKKSAPNAPSYTSVFGQTLLNMAEADSRIVGVTAAMPGGTGISTLQKAKPNRVFDVGIAEQHAVTFSAGMAAGGLKPFCAIYSSFLQRGYDQIVHDVALQSLPVRFMIDRAGLVGADGPTHAGAFDIGYLSALPNMTVMACADEAELVHMMATAAAHNDGPIALRYPRGEGTGVALPDQGDVLEIGKGRVIQDGHDVAILSFGAHLEEAKDAATALEARGLSVTVADARFAKPLDTTLIDDLMTKHSALITVEQGAVLGFGGLVLHHLAATGQLDGRCAVRTLHLPDRFIDQASPAEMYADAGLTADDIAQAALEAMGVEVLAARA</sequence>